<name>ATPL_MYCCT</name>
<proteinExistence type="inferred from homology"/>
<comment type="function">
    <text evidence="1">F(1)F(0) ATP synthase produces ATP from ADP in the presence of a proton or sodium gradient. F-type ATPases consist of two structural domains, F(1) containing the extramembraneous catalytic core and F(0) containing the membrane proton channel, linked together by a central stalk and a peripheral stalk. During catalysis, ATP synthesis in the catalytic domain of F(1) is coupled via a rotary mechanism of the central stalk subunits to proton translocation.</text>
</comment>
<comment type="function">
    <text evidence="1">Key component of the F(0) channel; it plays a direct role in translocation across the membrane. A homomeric c-ring of between 10-14 subunits forms the central stalk rotor element with the F(1) delta and epsilon subunits.</text>
</comment>
<comment type="subunit">
    <text evidence="1">F-type ATPases have 2 components, F(1) - the catalytic core - and F(0) - the membrane proton channel. F(1) has five subunits: alpha(3), beta(3), gamma(1), delta(1), epsilon(1). F(0) has three main subunits: a(1), b(2) and c(10-14). The alpha and beta chains form an alternating ring which encloses part of the gamma chain. F(1) is attached to F(0) by a central stalk formed by the gamma and epsilon chains, while a peripheral stalk is formed by the delta and b chains.</text>
</comment>
<comment type="subcellular location">
    <subcellularLocation>
        <location evidence="1">Cell membrane</location>
        <topology evidence="1">Multi-pass membrane protein</topology>
    </subcellularLocation>
</comment>
<comment type="similarity">
    <text evidence="1">Belongs to the ATPase C chain family.</text>
</comment>
<evidence type="ECO:0000255" key="1">
    <source>
        <dbReference type="HAMAP-Rule" id="MF_01396"/>
    </source>
</evidence>
<organism>
    <name type="scientific">Mycoplasma capricolum subsp. capricolum (strain California kid / ATCC 27343 / NCTC 10154)</name>
    <dbReference type="NCBI Taxonomy" id="340047"/>
    <lineage>
        <taxon>Bacteria</taxon>
        <taxon>Bacillati</taxon>
        <taxon>Mycoplasmatota</taxon>
        <taxon>Mollicutes</taxon>
        <taxon>Mycoplasmataceae</taxon>
        <taxon>Mycoplasma</taxon>
    </lineage>
</organism>
<protein>
    <recommendedName>
        <fullName evidence="1">ATP synthase subunit c</fullName>
    </recommendedName>
    <alternativeName>
        <fullName evidence="1">ATP synthase F(0) sector subunit c</fullName>
    </alternativeName>
    <alternativeName>
        <fullName evidence="1">F-type ATPase subunit c</fullName>
        <shortName evidence="1">F-ATPase subunit c</shortName>
    </alternativeName>
    <alternativeName>
        <fullName evidence="1">Lipid-binding protein</fullName>
    </alternativeName>
</protein>
<reference key="1">
    <citation type="submission" date="2005-09" db="EMBL/GenBank/DDBJ databases">
        <authorList>
            <person name="Glass J.I."/>
            <person name="Lartigue C."/>
            <person name="Pfannkoch C."/>
            <person name="Baden-Tillson H."/>
            <person name="Smith H.O."/>
            <person name="Venter J.C."/>
            <person name="Roske K."/>
            <person name="Wise K.S."/>
            <person name="Calcutt M.J."/>
            <person name="Nelson W.C."/>
            <person name="Nierman W.C."/>
        </authorList>
    </citation>
    <scope>NUCLEOTIDE SEQUENCE [LARGE SCALE GENOMIC DNA]</scope>
    <source>
        <strain>California kid / ATCC 27343 / NCTC 10154</strain>
    </source>
</reference>
<sequence>MLHTAFISNILANYLGAMSVILPNILTVTGDIKYIGAGLASVGILGTGVGQGLIGQGACLAIGRNPEMASKVTSTMIVSAGISESGAIYSLVIAILLIFVV</sequence>
<feature type="chain" id="PRO_0000365897" description="ATP synthase subunit c">
    <location>
        <begin position="1"/>
        <end position="101"/>
    </location>
</feature>
<feature type="transmembrane region" description="Helical" evidence="1">
    <location>
        <begin position="35"/>
        <end position="55"/>
    </location>
</feature>
<feature type="transmembrane region" description="Helical" evidence="1">
    <location>
        <begin position="81"/>
        <end position="101"/>
    </location>
</feature>
<feature type="site" description="Reversibly protonated during proton transport" evidence="1">
    <location>
        <position position="84"/>
    </location>
</feature>
<gene>
    <name evidence="1" type="primary">atpE</name>
    <name type="ordered locus">MCAP_0079</name>
</gene>
<keyword id="KW-0066">ATP synthesis</keyword>
<keyword id="KW-1003">Cell membrane</keyword>
<keyword id="KW-0138">CF(0)</keyword>
<keyword id="KW-0375">Hydrogen ion transport</keyword>
<keyword id="KW-0406">Ion transport</keyword>
<keyword id="KW-0446">Lipid-binding</keyword>
<keyword id="KW-0472">Membrane</keyword>
<keyword id="KW-0812">Transmembrane</keyword>
<keyword id="KW-1133">Transmembrane helix</keyword>
<keyword id="KW-0813">Transport</keyword>
<accession>Q2ST39</accession>
<dbReference type="EMBL" id="CP000123">
    <property type="protein sequence ID" value="ABC01331.1"/>
    <property type="molecule type" value="Genomic_DNA"/>
</dbReference>
<dbReference type="RefSeq" id="WP_011386979.1">
    <property type="nucleotide sequence ID" value="NC_007633.1"/>
</dbReference>
<dbReference type="SMR" id="Q2ST39"/>
<dbReference type="GeneID" id="23778966"/>
<dbReference type="KEGG" id="mcp:MCAP_0079"/>
<dbReference type="HOGENOM" id="CLU_148047_2_2_14"/>
<dbReference type="PhylomeDB" id="Q2ST39"/>
<dbReference type="Proteomes" id="UP000001928">
    <property type="component" value="Chromosome"/>
</dbReference>
<dbReference type="GO" id="GO:0005886">
    <property type="term" value="C:plasma membrane"/>
    <property type="evidence" value="ECO:0007669"/>
    <property type="project" value="UniProtKB-SubCell"/>
</dbReference>
<dbReference type="GO" id="GO:0045259">
    <property type="term" value="C:proton-transporting ATP synthase complex"/>
    <property type="evidence" value="ECO:0007669"/>
    <property type="project" value="UniProtKB-KW"/>
</dbReference>
<dbReference type="GO" id="GO:0033177">
    <property type="term" value="C:proton-transporting two-sector ATPase complex, proton-transporting domain"/>
    <property type="evidence" value="ECO:0007669"/>
    <property type="project" value="InterPro"/>
</dbReference>
<dbReference type="GO" id="GO:0008289">
    <property type="term" value="F:lipid binding"/>
    <property type="evidence" value="ECO:0007669"/>
    <property type="project" value="UniProtKB-KW"/>
</dbReference>
<dbReference type="GO" id="GO:0046933">
    <property type="term" value="F:proton-transporting ATP synthase activity, rotational mechanism"/>
    <property type="evidence" value="ECO:0007669"/>
    <property type="project" value="UniProtKB-UniRule"/>
</dbReference>
<dbReference type="CDD" id="cd18184">
    <property type="entry name" value="ATP-synt_Fo_c_NaATPase"/>
    <property type="match status" value="1"/>
</dbReference>
<dbReference type="Gene3D" id="1.20.20.10">
    <property type="entry name" value="F1F0 ATP synthase subunit C"/>
    <property type="match status" value="1"/>
</dbReference>
<dbReference type="HAMAP" id="MF_01396">
    <property type="entry name" value="ATP_synth_c_bact"/>
    <property type="match status" value="1"/>
</dbReference>
<dbReference type="InterPro" id="IPR000454">
    <property type="entry name" value="ATP_synth_F0_csu"/>
</dbReference>
<dbReference type="InterPro" id="IPR020537">
    <property type="entry name" value="ATP_synth_F0_csu_DDCD_BS"/>
</dbReference>
<dbReference type="InterPro" id="IPR038662">
    <property type="entry name" value="ATP_synth_F0_csu_sf"/>
</dbReference>
<dbReference type="InterPro" id="IPR002379">
    <property type="entry name" value="ATPase_proteolipid_c-like_dom"/>
</dbReference>
<dbReference type="InterPro" id="IPR035921">
    <property type="entry name" value="F/V-ATP_Csub_sf"/>
</dbReference>
<dbReference type="Pfam" id="PF00137">
    <property type="entry name" value="ATP-synt_C"/>
    <property type="match status" value="1"/>
</dbReference>
<dbReference type="PRINTS" id="PR00124">
    <property type="entry name" value="ATPASEC"/>
</dbReference>
<dbReference type="SUPFAM" id="SSF81333">
    <property type="entry name" value="F1F0 ATP synthase subunit C"/>
    <property type="match status" value="1"/>
</dbReference>
<dbReference type="PROSITE" id="PS00605">
    <property type="entry name" value="ATPASE_C"/>
    <property type="match status" value="1"/>
</dbReference>